<name>NNRE_MONDO</name>
<protein>
    <recommendedName>
        <fullName evidence="3">NAD(P)H-hydrate epimerase</fullName>
        <ecNumber evidence="2">5.1.99.6</ecNumber>
    </recommendedName>
    <alternativeName>
        <fullName evidence="3">Apolipoprotein A-I-binding protein</fullName>
        <shortName evidence="3">AI-BP</shortName>
    </alternativeName>
    <alternativeName>
        <fullName evidence="2">NAD(P)HX epimerase</fullName>
    </alternativeName>
</protein>
<feature type="transit peptide" description="Mitochondrion" evidence="3">
    <location>
        <begin position="1"/>
        <end position="55"/>
    </location>
</feature>
<feature type="chain" id="PRO_0000416309" description="NAD(P)H-hydrate epimerase">
    <location>
        <begin position="56"/>
        <end position="284"/>
    </location>
</feature>
<feature type="domain" description="YjeF N-terminal" evidence="3">
    <location>
        <begin position="61"/>
        <end position="271"/>
    </location>
</feature>
<feature type="binding site" evidence="3">
    <location>
        <begin position="115"/>
        <end position="119"/>
    </location>
    <ligand>
        <name>(6S)-NADPHX</name>
        <dbReference type="ChEBI" id="CHEBI:64076"/>
    </ligand>
</feature>
<feature type="binding site" evidence="3">
    <location>
        <position position="116"/>
    </location>
    <ligand>
        <name>K(+)</name>
        <dbReference type="ChEBI" id="CHEBI:29103"/>
    </ligand>
</feature>
<feature type="binding site" evidence="3">
    <location>
        <position position="181"/>
    </location>
    <ligand>
        <name>K(+)</name>
        <dbReference type="ChEBI" id="CHEBI:29103"/>
    </ligand>
</feature>
<feature type="binding site" evidence="3">
    <location>
        <begin position="185"/>
        <end position="191"/>
    </location>
    <ligand>
        <name>(6S)-NADPHX</name>
        <dbReference type="ChEBI" id="CHEBI:64076"/>
    </ligand>
</feature>
<feature type="binding site" evidence="3">
    <location>
        <position position="214"/>
    </location>
    <ligand>
        <name>(6S)-NADPHX</name>
        <dbReference type="ChEBI" id="CHEBI:64076"/>
    </ligand>
</feature>
<feature type="binding site" evidence="3">
    <location>
        <position position="217"/>
    </location>
    <ligand>
        <name>K(+)</name>
        <dbReference type="ChEBI" id="CHEBI:29103"/>
    </ligand>
</feature>
<feature type="modified residue" description="N6-succinyllysine" evidence="1">
    <location>
        <position position="140"/>
    </location>
</feature>
<evidence type="ECO:0000250" key="1">
    <source>
        <dbReference type="UniProtKB" id="Q8K4Z3"/>
    </source>
</evidence>
<evidence type="ECO:0000250" key="2">
    <source>
        <dbReference type="UniProtKB" id="Q8NCW5"/>
    </source>
</evidence>
<evidence type="ECO:0000255" key="3">
    <source>
        <dbReference type="HAMAP-Rule" id="MF_03159"/>
    </source>
</evidence>
<comment type="function">
    <text evidence="2 3">Catalyzes the epimerization of the S- and R-forms of NAD(P)HX, a damaged form of NAD(P)H that is a result of enzymatic or heat-dependent hydration. This is a prerequisite for the S-specific NAD(P)H-hydrate dehydratase to allow the repair of both epimers of NAD(P)HX. Accelerates cholesterol efflux from endothelial cells to high-density lipoprotein (HDL) and thereby regulates angiogenesis (By similarity).</text>
</comment>
<comment type="catalytic activity">
    <reaction evidence="2">
        <text>(6R)-NADHX = (6S)-NADHX</text>
        <dbReference type="Rhea" id="RHEA:32215"/>
        <dbReference type="ChEBI" id="CHEBI:64074"/>
        <dbReference type="ChEBI" id="CHEBI:64075"/>
        <dbReference type="EC" id="5.1.99.6"/>
    </reaction>
</comment>
<comment type="catalytic activity">
    <reaction evidence="2">
        <text>(6R)-NADPHX = (6S)-NADPHX</text>
        <dbReference type="Rhea" id="RHEA:32227"/>
        <dbReference type="ChEBI" id="CHEBI:64076"/>
        <dbReference type="ChEBI" id="CHEBI:64077"/>
        <dbReference type="EC" id="5.1.99.6"/>
    </reaction>
</comment>
<comment type="cofactor">
    <cofactor evidence="3">
        <name>K(+)</name>
        <dbReference type="ChEBI" id="CHEBI:29103"/>
    </cofactor>
    <text evidence="3">Binds 1 potassium ion per subunit.</text>
</comment>
<comment type="subunit">
    <text evidence="1 2">Homodimer (By similarity). Interacts with APOA1 and APOA2 (By similarity).</text>
</comment>
<comment type="subcellular location">
    <subcellularLocation>
        <location evidence="3">Mitochondrion</location>
    </subcellularLocation>
    <subcellularLocation>
        <location evidence="3">Secreted</location>
    </subcellularLocation>
    <text evidence="3">In sperm, secretion gradually increases during capacitation.</text>
</comment>
<comment type="PTM">
    <text evidence="3">Undergoes physiological phosphorylation during sperm capacitation, downstream to PKA activation.</text>
</comment>
<comment type="similarity">
    <text evidence="3">Belongs to the NnrE/AIBP family.</text>
</comment>
<reference key="1">
    <citation type="journal article" date="2007" name="Nature">
        <title>Genome of the marsupial Monodelphis domestica reveals innovation in non-coding sequences.</title>
        <authorList>
            <person name="Mikkelsen T.S."/>
            <person name="Wakefield M.J."/>
            <person name="Aken B."/>
            <person name="Amemiya C.T."/>
            <person name="Chang J.L."/>
            <person name="Duke S."/>
            <person name="Garber M."/>
            <person name="Gentles A.J."/>
            <person name="Goodstadt L."/>
            <person name="Heger A."/>
            <person name="Jurka J."/>
            <person name="Kamal M."/>
            <person name="Mauceli E."/>
            <person name="Searle S.M."/>
            <person name="Sharpe T."/>
            <person name="Baker M.L."/>
            <person name="Batzer M.A."/>
            <person name="Benos P.V."/>
            <person name="Belov K."/>
            <person name="Clamp M."/>
            <person name="Cook A."/>
            <person name="Cuff J."/>
            <person name="Das R."/>
            <person name="Davidow L."/>
            <person name="Deakin J.E."/>
            <person name="Fazzari M.J."/>
            <person name="Glass J.L."/>
            <person name="Grabherr M."/>
            <person name="Greally J.M."/>
            <person name="Gu W."/>
            <person name="Hore T.A."/>
            <person name="Huttley G.A."/>
            <person name="Kleber M."/>
            <person name="Jirtle R.L."/>
            <person name="Koina E."/>
            <person name="Lee J.T."/>
            <person name="Mahony S."/>
            <person name="Marra M.A."/>
            <person name="Miller R.D."/>
            <person name="Nicholls R.D."/>
            <person name="Oda M."/>
            <person name="Papenfuss A.T."/>
            <person name="Parra Z.E."/>
            <person name="Pollock D.D."/>
            <person name="Ray D.A."/>
            <person name="Schein J.E."/>
            <person name="Speed T.P."/>
            <person name="Thompson K."/>
            <person name="VandeBerg J.L."/>
            <person name="Wade C.M."/>
            <person name="Walker J.A."/>
            <person name="Waters P.D."/>
            <person name="Webber C."/>
            <person name="Weidman J.R."/>
            <person name="Xie X."/>
            <person name="Zody M.C."/>
            <person name="Baldwin J."/>
            <person name="Abdouelleil A."/>
            <person name="Abdulkadir J."/>
            <person name="Abebe A."/>
            <person name="Abera B."/>
            <person name="Abreu J."/>
            <person name="Acer S.C."/>
            <person name="Aftuck L."/>
            <person name="Alexander A."/>
            <person name="An P."/>
            <person name="Anderson E."/>
            <person name="Anderson S."/>
            <person name="Arachi H."/>
            <person name="Azer M."/>
            <person name="Bachantsang P."/>
            <person name="Barry A."/>
            <person name="Bayul T."/>
            <person name="Berlin A."/>
            <person name="Bessette D."/>
            <person name="Bloom T."/>
            <person name="Bloom T."/>
            <person name="Boguslavskiy L."/>
            <person name="Bonnet C."/>
            <person name="Boukhgalter B."/>
            <person name="Bourzgui I."/>
            <person name="Brown A."/>
            <person name="Cahill P."/>
            <person name="Channer S."/>
            <person name="Cheshatsang Y."/>
            <person name="Chuda L."/>
            <person name="Citroen M."/>
            <person name="Collymore A."/>
            <person name="Cooke P."/>
            <person name="Costello M."/>
            <person name="D'Aco K."/>
            <person name="Daza R."/>
            <person name="De Haan G."/>
            <person name="DeGray S."/>
            <person name="DeMaso C."/>
            <person name="Dhargay N."/>
            <person name="Dooley K."/>
            <person name="Dooley E."/>
            <person name="Doricent M."/>
            <person name="Dorje P."/>
            <person name="Dorjee K."/>
            <person name="Dupes A."/>
            <person name="Elong R."/>
            <person name="Falk J."/>
            <person name="Farina A."/>
            <person name="Faro S."/>
            <person name="Ferguson D."/>
            <person name="Fisher S."/>
            <person name="Foley C.D."/>
            <person name="Franke A."/>
            <person name="Friedrich D."/>
            <person name="Gadbois L."/>
            <person name="Gearin G."/>
            <person name="Gearin C.R."/>
            <person name="Giannoukos G."/>
            <person name="Goode T."/>
            <person name="Graham J."/>
            <person name="Grandbois E."/>
            <person name="Grewal S."/>
            <person name="Gyaltsen K."/>
            <person name="Hafez N."/>
            <person name="Hagos B."/>
            <person name="Hall J."/>
            <person name="Henson C."/>
            <person name="Hollinger A."/>
            <person name="Honan T."/>
            <person name="Huard M.D."/>
            <person name="Hughes L."/>
            <person name="Hurhula B."/>
            <person name="Husby M.E."/>
            <person name="Kamat A."/>
            <person name="Kanga B."/>
            <person name="Kashin S."/>
            <person name="Khazanovich D."/>
            <person name="Kisner P."/>
            <person name="Lance K."/>
            <person name="Lara M."/>
            <person name="Lee W."/>
            <person name="Lennon N."/>
            <person name="Letendre F."/>
            <person name="LeVine R."/>
            <person name="Lipovsky A."/>
            <person name="Liu X."/>
            <person name="Liu J."/>
            <person name="Liu S."/>
            <person name="Lokyitsang T."/>
            <person name="Lokyitsang Y."/>
            <person name="Lubonja R."/>
            <person name="Lui A."/>
            <person name="MacDonald P."/>
            <person name="Magnisalis V."/>
            <person name="Maru K."/>
            <person name="Matthews C."/>
            <person name="McCusker W."/>
            <person name="McDonough S."/>
            <person name="Mehta T."/>
            <person name="Meldrim J."/>
            <person name="Meneus L."/>
            <person name="Mihai O."/>
            <person name="Mihalev A."/>
            <person name="Mihova T."/>
            <person name="Mittelman R."/>
            <person name="Mlenga V."/>
            <person name="Montmayeur A."/>
            <person name="Mulrain L."/>
            <person name="Navidi A."/>
            <person name="Naylor J."/>
            <person name="Negash T."/>
            <person name="Nguyen T."/>
            <person name="Nguyen N."/>
            <person name="Nicol R."/>
            <person name="Norbu C."/>
            <person name="Norbu N."/>
            <person name="Novod N."/>
            <person name="O'Neill B."/>
            <person name="Osman S."/>
            <person name="Markiewicz E."/>
            <person name="Oyono O.L."/>
            <person name="Patti C."/>
            <person name="Phunkhang P."/>
            <person name="Pierre F."/>
            <person name="Priest M."/>
            <person name="Raghuraman S."/>
            <person name="Rege F."/>
            <person name="Reyes R."/>
            <person name="Rise C."/>
            <person name="Rogov P."/>
            <person name="Ross K."/>
            <person name="Ryan E."/>
            <person name="Settipalli S."/>
            <person name="Shea T."/>
            <person name="Sherpa N."/>
            <person name="Shi L."/>
            <person name="Shih D."/>
            <person name="Sparrow T."/>
            <person name="Spaulding J."/>
            <person name="Stalker J."/>
            <person name="Stange-Thomann N."/>
            <person name="Stavropoulos S."/>
            <person name="Stone C."/>
            <person name="Strader C."/>
            <person name="Tesfaye S."/>
            <person name="Thomson T."/>
            <person name="Thoulutsang Y."/>
            <person name="Thoulutsang D."/>
            <person name="Topham K."/>
            <person name="Topping I."/>
            <person name="Tsamla T."/>
            <person name="Vassiliev H."/>
            <person name="Vo A."/>
            <person name="Wangchuk T."/>
            <person name="Wangdi T."/>
            <person name="Weiand M."/>
            <person name="Wilkinson J."/>
            <person name="Wilson A."/>
            <person name="Yadav S."/>
            <person name="Young G."/>
            <person name="Yu Q."/>
            <person name="Zembek L."/>
            <person name="Zhong D."/>
            <person name="Zimmer A."/>
            <person name="Zwirko Z."/>
            <person name="Jaffe D.B."/>
            <person name="Alvarez P."/>
            <person name="Brockman W."/>
            <person name="Butler J."/>
            <person name="Chin C."/>
            <person name="Gnerre S."/>
            <person name="MacCallum I."/>
            <person name="Graves J.A."/>
            <person name="Ponting C.P."/>
            <person name="Breen M."/>
            <person name="Samollow P.B."/>
            <person name="Lander E.S."/>
            <person name="Lindblad-Toh K."/>
        </authorList>
    </citation>
    <scope>NUCLEOTIDE SEQUENCE [LARGE SCALE GENOMIC DNA]</scope>
</reference>
<organism>
    <name type="scientific">Monodelphis domestica</name>
    <name type="common">Gray short-tailed opossum</name>
    <dbReference type="NCBI Taxonomy" id="13616"/>
    <lineage>
        <taxon>Eukaryota</taxon>
        <taxon>Metazoa</taxon>
        <taxon>Chordata</taxon>
        <taxon>Craniata</taxon>
        <taxon>Vertebrata</taxon>
        <taxon>Euteleostomi</taxon>
        <taxon>Mammalia</taxon>
        <taxon>Metatheria</taxon>
        <taxon>Didelphimorphia</taxon>
        <taxon>Didelphidae</taxon>
        <taxon>Monodelphis</taxon>
    </lineage>
</organism>
<dbReference type="EC" id="5.1.99.6" evidence="2"/>
<dbReference type="RefSeq" id="XP_001367473.1">
    <property type="nucleotide sequence ID" value="XM_001367436.5"/>
</dbReference>
<dbReference type="SMR" id="F7FIH8"/>
<dbReference type="FunCoup" id="F7FIH8">
    <property type="interactions" value="784"/>
</dbReference>
<dbReference type="STRING" id="13616.ENSMODP00000020995"/>
<dbReference type="Ensembl" id="ENSMODT00000021365.2">
    <property type="protein sequence ID" value="ENSMODP00000020995.1"/>
    <property type="gene ID" value="ENSMODG00000016821.2"/>
</dbReference>
<dbReference type="GeneID" id="100018290"/>
<dbReference type="KEGG" id="mdo:100018290"/>
<dbReference type="CTD" id="128240"/>
<dbReference type="eggNOG" id="KOG2585">
    <property type="taxonomic scope" value="Eukaryota"/>
</dbReference>
<dbReference type="GeneTree" id="ENSGT00390000007227"/>
<dbReference type="HOGENOM" id="CLU_024853_3_0_1"/>
<dbReference type="InParanoid" id="F7FIH8"/>
<dbReference type="OMA" id="RHLFHYG"/>
<dbReference type="OrthoDB" id="10064708at2759"/>
<dbReference type="TreeFam" id="TF300197"/>
<dbReference type="Proteomes" id="UP000002280">
    <property type="component" value="Chromosome 2"/>
</dbReference>
<dbReference type="Bgee" id="ENSMODG00000016821">
    <property type="expression patterns" value="Expressed in placenta and 17 other cell types or tissues"/>
</dbReference>
<dbReference type="GO" id="GO:0044297">
    <property type="term" value="C:cell body"/>
    <property type="evidence" value="ECO:0007669"/>
    <property type="project" value="Ensembl"/>
</dbReference>
<dbReference type="GO" id="GO:0005929">
    <property type="term" value="C:cilium"/>
    <property type="evidence" value="ECO:0007669"/>
    <property type="project" value="Ensembl"/>
</dbReference>
<dbReference type="GO" id="GO:0005829">
    <property type="term" value="C:cytosol"/>
    <property type="evidence" value="ECO:0007669"/>
    <property type="project" value="Ensembl"/>
</dbReference>
<dbReference type="GO" id="GO:0005615">
    <property type="term" value="C:extracellular space"/>
    <property type="evidence" value="ECO:0007669"/>
    <property type="project" value="Ensembl"/>
</dbReference>
<dbReference type="GO" id="GO:0005739">
    <property type="term" value="C:mitochondrion"/>
    <property type="evidence" value="ECO:0000318"/>
    <property type="project" value="GO_Central"/>
</dbReference>
<dbReference type="GO" id="GO:0005634">
    <property type="term" value="C:nucleus"/>
    <property type="evidence" value="ECO:0007669"/>
    <property type="project" value="Ensembl"/>
</dbReference>
<dbReference type="GO" id="GO:0042802">
    <property type="term" value="F:identical protein binding"/>
    <property type="evidence" value="ECO:0007669"/>
    <property type="project" value="Ensembl"/>
</dbReference>
<dbReference type="GO" id="GO:0046872">
    <property type="term" value="F:metal ion binding"/>
    <property type="evidence" value="ECO:0007669"/>
    <property type="project" value="UniProtKB-KW"/>
</dbReference>
<dbReference type="GO" id="GO:0052856">
    <property type="term" value="F:NAD(P)HX epimerase activity"/>
    <property type="evidence" value="ECO:0000318"/>
    <property type="project" value="GO_Central"/>
</dbReference>
<dbReference type="GO" id="GO:0000166">
    <property type="term" value="F:nucleotide binding"/>
    <property type="evidence" value="ECO:0007669"/>
    <property type="project" value="UniProtKB-KW"/>
</dbReference>
<dbReference type="GO" id="GO:0006869">
    <property type="term" value="P:lipid transport"/>
    <property type="evidence" value="ECO:0007669"/>
    <property type="project" value="UniProtKB-KW"/>
</dbReference>
<dbReference type="GO" id="GO:0031580">
    <property type="term" value="P:membrane raft distribution"/>
    <property type="evidence" value="ECO:0000250"/>
    <property type="project" value="UniProtKB"/>
</dbReference>
<dbReference type="GO" id="GO:0016525">
    <property type="term" value="P:negative regulation of angiogenesis"/>
    <property type="evidence" value="ECO:0000250"/>
    <property type="project" value="UniProtKB"/>
</dbReference>
<dbReference type="GO" id="GO:0046496">
    <property type="term" value="P:nicotinamide nucleotide metabolic process"/>
    <property type="evidence" value="ECO:0007669"/>
    <property type="project" value="Ensembl"/>
</dbReference>
<dbReference type="GO" id="GO:0010874">
    <property type="term" value="P:regulation of cholesterol efflux"/>
    <property type="evidence" value="ECO:0000250"/>
    <property type="project" value="UniProtKB"/>
</dbReference>
<dbReference type="GO" id="GO:0002040">
    <property type="term" value="P:sprouting angiogenesis"/>
    <property type="evidence" value="ECO:0000250"/>
    <property type="project" value="UniProtKB"/>
</dbReference>
<dbReference type="FunFam" id="3.40.50.10260:FF:000002">
    <property type="entry name" value="NAD(P)H-hydrate epimerase"/>
    <property type="match status" value="1"/>
</dbReference>
<dbReference type="Gene3D" id="3.40.50.10260">
    <property type="entry name" value="YjeF N-terminal domain"/>
    <property type="match status" value="1"/>
</dbReference>
<dbReference type="HAMAP" id="MF_01966">
    <property type="entry name" value="NADHX_epimerase"/>
    <property type="match status" value="1"/>
</dbReference>
<dbReference type="InterPro" id="IPR004443">
    <property type="entry name" value="YjeF_N_dom"/>
</dbReference>
<dbReference type="InterPro" id="IPR036652">
    <property type="entry name" value="YjeF_N_dom_sf"/>
</dbReference>
<dbReference type="InterPro" id="IPR032976">
    <property type="entry name" value="YJEFN_prot_NAXE-like"/>
</dbReference>
<dbReference type="NCBIfam" id="TIGR00197">
    <property type="entry name" value="yjeF_nterm"/>
    <property type="match status" value="1"/>
</dbReference>
<dbReference type="PANTHER" id="PTHR13232">
    <property type="entry name" value="NAD(P)H-HYDRATE EPIMERASE"/>
    <property type="match status" value="1"/>
</dbReference>
<dbReference type="PANTHER" id="PTHR13232:SF11">
    <property type="entry name" value="NAD(P)H-HYDRATE EPIMERASE"/>
    <property type="match status" value="1"/>
</dbReference>
<dbReference type="Pfam" id="PF03853">
    <property type="entry name" value="YjeF_N"/>
    <property type="match status" value="1"/>
</dbReference>
<dbReference type="SUPFAM" id="SSF64153">
    <property type="entry name" value="YjeF N-terminal domain-like"/>
    <property type="match status" value="1"/>
</dbReference>
<dbReference type="PROSITE" id="PS51385">
    <property type="entry name" value="YJEF_N"/>
    <property type="match status" value="1"/>
</dbReference>
<proteinExistence type="inferred from homology"/>
<keyword id="KW-0413">Isomerase</keyword>
<keyword id="KW-0445">Lipid transport</keyword>
<keyword id="KW-0479">Metal-binding</keyword>
<keyword id="KW-0496">Mitochondrion</keyword>
<keyword id="KW-0520">NAD</keyword>
<keyword id="KW-0521">NADP</keyword>
<keyword id="KW-0547">Nucleotide-binding</keyword>
<keyword id="KW-0630">Potassium</keyword>
<keyword id="KW-1185">Reference proteome</keyword>
<keyword id="KW-0964">Secreted</keyword>
<keyword id="KW-0809">Transit peptide</keyword>
<keyword id="KW-0813">Transport</keyword>
<sequence length="284" mass="30838">MSGLRTLLGLGLLVSSSRFPRVVARGGPRCPGPAWWAARPMHLGDSTMAGGTVKYLSQEEAQAVDEELFNEYKFSVDQLMELAGLSCATAIAKAYPLSSFGSNPPAVLVICGPGNNGGDGLVCARHLKLFGYEPKIHYPKKPNKPLFDALVTQCQKMDIPFLPEVPPEPMLIDELYELVVDAIFGFSFKGAVREPFGTILSIMNGLTVPIASIDIPSGWDVEKGNPEGIRPDLLISLTAPKKAATLFKGRHHYLGGRFVPSDLEKKYQLNLPPYPGTDCVLQLQ</sequence>
<gene>
    <name evidence="2" type="primary">NAXE</name>
    <name evidence="3" type="synonym">AIBP</name>
    <name evidence="3" type="synonym">APOA1BP</name>
</gene>
<accession>F7FIH8</accession>